<reference key="1">
    <citation type="journal article" date="2008" name="J. Bacteriol.">
        <title>Genome sequence of the chemolithoautotrophic bacterium Oligotropha carboxidovorans OM5T.</title>
        <authorList>
            <person name="Paul D."/>
            <person name="Bridges S."/>
            <person name="Burgess S.C."/>
            <person name="Dandass Y."/>
            <person name="Lawrence M.L."/>
        </authorList>
    </citation>
    <scope>NUCLEOTIDE SEQUENCE [LARGE SCALE GENOMIC DNA]</scope>
    <source>
        <strain>ATCC 49405 / DSM 1227 / KCTC 32145 / OM5</strain>
    </source>
</reference>
<reference key="2">
    <citation type="journal article" date="2011" name="J. Bacteriol.">
        <title>Complete genome sequences of the chemolithoautotrophic Oligotropha carboxidovorans strains OM4 and OM5.</title>
        <authorList>
            <person name="Volland S."/>
            <person name="Rachinger M."/>
            <person name="Strittmatter A."/>
            <person name="Daniel R."/>
            <person name="Gottschalk G."/>
            <person name="Meyer O."/>
        </authorList>
    </citation>
    <scope>NUCLEOTIDE SEQUENCE [LARGE SCALE GENOMIC DNA]</scope>
    <source>
        <strain>ATCC 49405 / DSM 1227 / KCTC 32145 / OM5</strain>
    </source>
</reference>
<dbReference type="EC" id="3.4.21.92" evidence="1"/>
<dbReference type="EMBL" id="CP001196">
    <property type="protein sequence ID" value="ACI93031.1"/>
    <property type="molecule type" value="Genomic_DNA"/>
</dbReference>
<dbReference type="EMBL" id="CP002826">
    <property type="protein sequence ID" value="AEI06816.1"/>
    <property type="molecule type" value="Genomic_DNA"/>
</dbReference>
<dbReference type="RefSeq" id="WP_012563058.1">
    <property type="nucleotide sequence ID" value="NC_015684.1"/>
</dbReference>
<dbReference type="SMR" id="B6JGU7"/>
<dbReference type="STRING" id="504832.OCA5_c21110"/>
<dbReference type="MEROPS" id="S14.001"/>
<dbReference type="KEGG" id="oca:OCAR_5908"/>
<dbReference type="KEGG" id="ocg:OCA5_c21110"/>
<dbReference type="PATRIC" id="fig|504832.7.peg.2232"/>
<dbReference type="eggNOG" id="COG0740">
    <property type="taxonomic scope" value="Bacteria"/>
</dbReference>
<dbReference type="HOGENOM" id="CLU_058707_3_2_5"/>
<dbReference type="OrthoDB" id="9802800at2"/>
<dbReference type="Proteomes" id="UP000007730">
    <property type="component" value="Chromosome"/>
</dbReference>
<dbReference type="GO" id="GO:0005737">
    <property type="term" value="C:cytoplasm"/>
    <property type="evidence" value="ECO:0007669"/>
    <property type="project" value="UniProtKB-SubCell"/>
</dbReference>
<dbReference type="GO" id="GO:0009368">
    <property type="term" value="C:endopeptidase Clp complex"/>
    <property type="evidence" value="ECO:0007669"/>
    <property type="project" value="TreeGrafter"/>
</dbReference>
<dbReference type="GO" id="GO:0004176">
    <property type="term" value="F:ATP-dependent peptidase activity"/>
    <property type="evidence" value="ECO:0007669"/>
    <property type="project" value="InterPro"/>
</dbReference>
<dbReference type="GO" id="GO:0051117">
    <property type="term" value="F:ATPase binding"/>
    <property type="evidence" value="ECO:0007669"/>
    <property type="project" value="TreeGrafter"/>
</dbReference>
<dbReference type="GO" id="GO:0004252">
    <property type="term" value="F:serine-type endopeptidase activity"/>
    <property type="evidence" value="ECO:0007669"/>
    <property type="project" value="UniProtKB-UniRule"/>
</dbReference>
<dbReference type="GO" id="GO:0006515">
    <property type="term" value="P:protein quality control for misfolded or incompletely synthesized proteins"/>
    <property type="evidence" value="ECO:0007669"/>
    <property type="project" value="TreeGrafter"/>
</dbReference>
<dbReference type="CDD" id="cd07017">
    <property type="entry name" value="S14_ClpP_2"/>
    <property type="match status" value="1"/>
</dbReference>
<dbReference type="FunFam" id="3.90.226.10:FF:000001">
    <property type="entry name" value="ATP-dependent Clp protease proteolytic subunit"/>
    <property type="match status" value="1"/>
</dbReference>
<dbReference type="Gene3D" id="3.90.226.10">
    <property type="entry name" value="2-enoyl-CoA Hydratase, Chain A, domain 1"/>
    <property type="match status" value="1"/>
</dbReference>
<dbReference type="HAMAP" id="MF_00444">
    <property type="entry name" value="ClpP"/>
    <property type="match status" value="1"/>
</dbReference>
<dbReference type="InterPro" id="IPR001907">
    <property type="entry name" value="ClpP"/>
</dbReference>
<dbReference type="InterPro" id="IPR029045">
    <property type="entry name" value="ClpP/crotonase-like_dom_sf"/>
</dbReference>
<dbReference type="InterPro" id="IPR023562">
    <property type="entry name" value="ClpP/TepA"/>
</dbReference>
<dbReference type="InterPro" id="IPR033135">
    <property type="entry name" value="ClpP_His_AS"/>
</dbReference>
<dbReference type="NCBIfam" id="NF001368">
    <property type="entry name" value="PRK00277.1"/>
    <property type="match status" value="1"/>
</dbReference>
<dbReference type="NCBIfam" id="NF009205">
    <property type="entry name" value="PRK12553.1"/>
    <property type="match status" value="1"/>
</dbReference>
<dbReference type="PANTHER" id="PTHR10381">
    <property type="entry name" value="ATP-DEPENDENT CLP PROTEASE PROTEOLYTIC SUBUNIT"/>
    <property type="match status" value="1"/>
</dbReference>
<dbReference type="PANTHER" id="PTHR10381:SF70">
    <property type="entry name" value="ATP-DEPENDENT CLP PROTEASE PROTEOLYTIC SUBUNIT"/>
    <property type="match status" value="1"/>
</dbReference>
<dbReference type="Pfam" id="PF00574">
    <property type="entry name" value="CLP_protease"/>
    <property type="match status" value="1"/>
</dbReference>
<dbReference type="PRINTS" id="PR00127">
    <property type="entry name" value="CLPPROTEASEP"/>
</dbReference>
<dbReference type="SUPFAM" id="SSF52096">
    <property type="entry name" value="ClpP/crotonase"/>
    <property type="match status" value="1"/>
</dbReference>
<dbReference type="PROSITE" id="PS00382">
    <property type="entry name" value="CLP_PROTEASE_HIS"/>
    <property type="match status" value="1"/>
</dbReference>
<comment type="function">
    <text evidence="1">Cleaves peptides in various proteins in a process that requires ATP hydrolysis. Has a chymotrypsin-like activity. Plays a major role in the degradation of misfolded proteins.</text>
</comment>
<comment type="catalytic activity">
    <reaction evidence="1">
        <text>Hydrolysis of proteins to small peptides in the presence of ATP and magnesium. alpha-casein is the usual test substrate. In the absence of ATP, only oligopeptides shorter than five residues are hydrolyzed (such as succinyl-Leu-Tyr-|-NHMec, and Leu-Tyr-Leu-|-Tyr-Trp, in which cleavage of the -Tyr-|-Leu- and -Tyr-|-Trp bonds also occurs).</text>
        <dbReference type="EC" id="3.4.21.92"/>
    </reaction>
</comment>
<comment type="subunit">
    <text evidence="1">Fourteen ClpP subunits assemble into 2 heptameric rings which stack back to back to give a disk-like structure with a central cavity, resembling the structure of eukaryotic proteasomes.</text>
</comment>
<comment type="subcellular location">
    <subcellularLocation>
        <location evidence="1">Cytoplasm</location>
    </subcellularLocation>
</comment>
<comment type="similarity">
    <text evidence="1">Belongs to the peptidase S14 family.</text>
</comment>
<gene>
    <name evidence="1" type="primary">clpP</name>
    <name type="ordered locus">OCAR_5908</name>
    <name type="ordered locus">OCA5_c21110</name>
</gene>
<proteinExistence type="inferred from homology"/>
<name>CLPP_AFIC5</name>
<feature type="chain" id="PRO_1000189658" description="ATP-dependent Clp protease proteolytic subunit">
    <location>
        <begin position="1"/>
        <end position="210"/>
    </location>
</feature>
<feature type="active site" description="Nucleophile" evidence="1">
    <location>
        <position position="106"/>
    </location>
</feature>
<feature type="active site" evidence="1">
    <location>
        <position position="131"/>
    </location>
</feature>
<keyword id="KW-0963">Cytoplasm</keyword>
<keyword id="KW-0378">Hydrolase</keyword>
<keyword id="KW-0645">Protease</keyword>
<keyword id="KW-1185">Reference proteome</keyword>
<keyword id="KW-0720">Serine protease</keyword>
<sequence length="210" mass="23364">MRDPVETYMNLVPMVVEQTNRGERAYDIFSRLLKERIIFVTGPVEDGMSTLIVAQLLFLEAENPKKEISMYINSPGGVVTSGLAIYDTMQFIRPPVSTLCTGQAASMGSLLLAAGEKDMRFSLPNSRIMVHQPSGGFQGQATDIMLHAQEILNLKKRLNEIYVKHTGQSYQAIEDALERDNFLTAEKARDFGIVDKVIDKRPEDPVAKAA</sequence>
<accession>B6JGU7</accession>
<accession>F8BX39</accession>
<organism>
    <name type="scientific">Afipia carboxidovorans (strain ATCC 49405 / DSM 1227 / KCTC 32145 / OM5)</name>
    <name type="common">Oligotropha carboxidovorans</name>
    <dbReference type="NCBI Taxonomy" id="504832"/>
    <lineage>
        <taxon>Bacteria</taxon>
        <taxon>Pseudomonadati</taxon>
        <taxon>Pseudomonadota</taxon>
        <taxon>Alphaproteobacteria</taxon>
        <taxon>Hyphomicrobiales</taxon>
        <taxon>Nitrobacteraceae</taxon>
        <taxon>Afipia</taxon>
    </lineage>
</organism>
<protein>
    <recommendedName>
        <fullName evidence="1">ATP-dependent Clp protease proteolytic subunit</fullName>
        <ecNumber evidence="1">3.4.21.92</ecNumber>
    </recommendedName>
    <alternativeName>
        <fullName evidence="1">Endopeptidase Clp</fullName>
    </alternativeName>
</protein>
<evidence type="ECO:0000255" key="1">
    <source>
        <dbReference type="HAMAP-Rule" id="MF_00444"/>
    </source>
</evidence>